<comment type="function">
    <text evidence="1">Cysteine protease that plays an essential role in host liquefaction to facilitate horizontal transmission of the virus. May participate in the degradation of foreign protein expressed by the baculovirus system (By similarity).</text>
</comment>
<comment type="catalytic activity">
    <reaction>
        <text>Endopeptidase of broad specificity, hydrolyzing substrates of both cathepsin L and cathepsin B.</text>
        <dbReference type="EC" id="3.4.22.50"/>
    </reaction>
</comment>
<comment type="PTM">
    <text evidence="1">Synthesized as an inactive proenzyme and activated by proteolytic removal of the inhibitory propeptide.</text>
</comment>
<comment type="similarity">
    <text evidence="3 4 5">Belongs to the peptidase C1 family.</text>
</comment>
<sequence length="337" mass="38387">MNKLLILFLLLNAALTRQDNHASANNKPMLYNINSAPLYFEKFITQYNKQYKSEDEKKYRYNIFRHNIESINQKNSRNDSAVYKINRFADMPKNEIVIRHTGLASGELGLNFCETIVVDGPAQRQRPVSFDWRSMNKITSVKDQGMCGACWRFASLGALESQYAIKYDRLIDLSEQQLVDCDFVDMGCDGGLIHTAYEQIMKMGGVEQEFDYSYKAERQPCALKPHKFATGVRNCYRYVILNEERLEDLLRYVGPIAIAVDAVDLTDYYGGIVSFCENNGLNHAVLLVGYGVENNVPYWIIKNSWGSDYGEDGYVRVRRGVNSCGMINELASSAQVV</sequence>
<protein>
    <recommendedName>
        <fullName>Viral cathepsin</fullName>
        <shortName>V-cath</shortName>
        <ecNumber>3.4.22.50</ecNumber>
    </recommendedName>
    <alternativeName>
        <fullName>Cysteine proteinase</fullName>
        <shortName>CP</shortName>
    </alternativeName>
</protein>
<accession>Q9J8B9</accession>
<organismHost>
    <name type="scientific">Lepidoptera</name>
    <name type="common">butterflies and moths</name>
    <dbReference type="NCBI Taxonomy" id="7088"/>
</organismHost>
<dbReference type="EC" id="3.4.22.50"/>
<dbReference type="EMBL" id="AF169823">
    <property type="protein sequence ID" value="AAF33546.1"/>
    <property type="molecule type" value="Genomic_DNA"/>
</dbReference>
<dbReference type="RefSeq" id="NP_037776.1">
    <property type="nucleotide sequence ID" value="NC_002169.1"/>
</dbReference>
<dbReference type="SMR" id="Q9J8B9"/>
<dbReference type="MEROPS" id="C01.083"/>
<dbReference type="KEGG" id="vg:2715768"/>
<dbReference type="Proteomes" id="UP000203151">
    <property type="component" value="Segment"/>
</dbReference>
<dbReference type="GO" id="GO:0008234">
    <property type="term" value="F:cysteine-type peptidase activity"/>
    <property type="evidence" value="ECO:0007669"/>
    <property type="project" value="UniProtKB-KW"/>
</dbReference>
<dbReference type="GO" id="GO:0006508">
    <property type="term" value="P:proteolysis"/>
    <property type="evidence" value="ECO:0007669"/>
    <property type="project" value="UniProtKB-KW"/>
</dbReference>
<dbReference type="CDD" id="cd02248">
    <property type="entry name" value="Peptidase_C1A"/>
    <property type="match status" value="1"/>
</dbReference>
<dbReference type="Gene3D" id="3.90.70.10">
    <property type="entry name" value="Cysteine proteinases"/>
    <property type="match status" value="1"/>
</dbReference>
<dbReference type="InterPro" id="IPR038765">
    <property type="entry name" value="Papain-like_cys_pep_sf"/>
</dbReference>
<dbReference type="InterPro" id="IPR025661">
    <property type="entry name" value="Pept_asp_AS"/>
</dbReference>
<dbReference type="InterPro" id="IPR000169">
    <property type="entry name" value="Pept_cys_AS"/>
</dbReference>
<dbReference type="InterPro" id="IPR025660">
    <property type="entry name" value="Pept_his_AS"/>
</dbReference>
<dbReference type="InterPro" id="IPR013128">
    <property type="entry name" value="Peptidase_C1A"/>
</dbReference>
<dbReference type="InterPro" id="IPR000668">
    <property type="entry name" value="Peptidase_C1A_C"/>
</dbReference>
<dbReference type="InterPro" id="IPR039417">
    <property type="entry name" value="Peptidase_C1A_papain-like"/>
</dbReference>
<dbReference type="InterPro" id="IPR013201">
    <property type="entry name" value="Prot_inhib_I29"/>
</dbReference>
<dbReference type="PANTHER" id="PTHR12411">
    <property type="entry name" value="CYSTEINE PROTEASE FAMILY C1-RELATED"/>
    <property type="match status" value="1"/>
</dbReference>
<dbReference type="Pfam" id="PF08246">
    <property type="entry name" value="Inhibitor_I29"/>
    <property type="match status" value="1"/>
</dbReference>
<dbReference type="Pfam" id="PF00112">
    <property type="entry name" value="Peptidase_C1"/>
    <property type="match status" value="1"/>
</dbReference>
<dbReference type="PRINTS" id="PR00705">
    <property type="entry name" value="PAPAIN"/>
</dbReference>
<dbReference type="SMART" id="SM00848">
    <property type="entry name" value="Inhibitor_I29"/>
    <property type="match status" value="1"/>
</dbReference>
<dbReference type="SMART" id="SM00645">
    <property type="entry name" value="Pept_C1"/>
    <property type="match status" value="1"/>
</dbReference>
<dbReference type="SUPFAM" id="SSF54001">
    <property type="entry name" value="Cysteine proteinases"/>
    <property type="match status" value="1"/>
</dbReference>
<dbReference type="PROSITE" id="PS00640">
    <property type="entry name" value="THIOL_PROTEASE_ASN"/>
    <property type="match status" value="1"/>
</dbReference>
<dbReference type="PROSITE" id="PS00139">
    <property type="entry name" value="THIOL_PROTEASE_CYS"/>
    <property type="match status" value="1"/>
</dbReference>
<dbReference type="PROSITE" id="PS00639">
    <property type="entry name" value="THIOL_PROTEASE_HIS"/>
    <property type="match status" value="1"/>
</dbReference>
<evidence type="ECO:0000250" key="1"/>
<evidence type="ECO:0000255" key="2"/>
<evidence type="ECO:0000255" key="3">
    <source>
        <dbReference type="PROSITE-ProRule" id="PRU10088"/>
    </source>
</evidence>
<evidence type="ECO:0000255" key="4">
    <source>
        <dbReference type="PROSITE-ProRule" id="PRU10089"/>
    </source>
</evidence>
<evidence type="ECO:0000255" key="5">
    <source>
        <dbReference type="PROSITE-ProRule" id="PRU10090"/>
    </source>
</evidence>
<reference key="1">
    <citation type="journal article" date="1999" name="J. Gen. Virol.">
        <title>Sequence and organization of the Spodoptera exigua multicapsid nucleopolyhedrovirus genome.</title>
        <authorList>
            <person name="Ijkel W.F.J."/>
            <person name="van Strien E.A."/>
            <person name="Heldens J.G.M."/>
            <person name="Broer R."/>
            <person name="Zuidema D."/>
            <person name="Goldbach R.W."/>
            <person name="Vlak J.M."/>
        </authorList>
    </citation>
    <scope>NUCLEOTIDE SEQUENCE [LARGE SCALE GENOMIC DNA]</scope>
</reference>
<keyword id="KW-1015">Disulfide bond</keyword>
<keyword id="KW-0378">Hydrolase</keyword>
<keyword id="KW-0645">Protease</keyword>
<keyword id="KW-0732">Signal</keyword>
<keyword id="KW-0788">Thiol protease</keyword>
<keyword id="KW-0865">Zymogen</keyword>
<feature type="signal peptide" evidence="2">
    <location>
        <begin position="1"/>
        <end position="16"/>
    </location>
</feature>
<feature type="propeptide" id="PRO_0000322216" description="Activation peptide" evidence="2">
    <location>
        <begin position="17"/>
        <end position="126"/>
    </location>
</feature>
<feature type="chain" id="PRO_0000050586" description="Viral cathepsin">
    <location>
        <begin position="127"/>
        <end position="337"/>
    </location>
</feature>
<feature type="active site" evidence="1">
    <location>
        <position position="150"/>
    </location>
</feature>
<feature type="active site" evidence="1">
    <location>
        <position position="283"/>
    </location>
</feature>
<feature type="active site" evidence="1">
    <location>
        <position position="303"/>
    </location>
</feature>
<feature type="disulfide bond" evidence="1">
    <location>
        <begin position="147"/>
        <end position="188"/>
    </location>
</feature>
<feature type="disulfide bond" evidence="1">
    <location>
        <begin position="181"/>
        <end position="221"/>
    </location>
</feature>
<feature type="disulfide bond" evidence="1">
    <location>
        <begin position="276"/>
        <end position="324"/>
    </location>
</feature>
<name>CATV_NPVSE</name>
<gene>
    <name type="primary">VCATH</name>
    <name type="synonym">16</name>
</gene>
<proteinExistence type="inferred from homology"/>
<organism>
    <name type="scientific">Spodoptera exigua nuclear polyhedrosis virus (strain US)</name>
    <name type="common">SeMNPV</name>
    <dbReference type="NCBI Taxonomy" id="31506"/>
    <lineage>
        <taxon>Viruses</taxon>
        <taxon>Viruses incertae sedis</taxon>
        <taxon>Naldaviricetes</taxon>
        <taxon>Lefavirales</taxon>
        <taxon>Baculoviridae</taxon>
        <taxon>Alphabaculovirus</taxon>
        <taxon>Spodoptera exigua multiple nucleopolyhedrovirus</taxon>
    </lineage>
</organism>